<keyword id="KW-0027">Amidation</keyword>
<keyword id="KW-0165">Cleavage on pair of basic residues</keyword>
<keyword id="KW-0903">Direct protein sequencing</keyword>
<keyword id="KW-0527">Neuropeptide</keyword>
<keyword id="KW-0964">Secreted</keyword>
<keyword id="KW-0732">Signal</keyword>
<accession>C0HKR2</accession>
<accession>C0HKR3</accession>
<accession>C0HKR4</accession>
<accession>C0HKR5</accession>
<accession>C0HKR6</accession>
<accession>C0HKR7</accession>
<accession>C0HKR8</accession>
<accession>C0HKR9</accession>
<protein>
    <recommendedName>
        <fullName evidence="5">Allatostatin-A</fullName>
    </recommendedName>
    <component>
        <recommendedName>
            <fullName evidence="5">Allatostatin-A-1</fullName>
            <shortName evidence="5">AST-A-1</shortName>
        </recommendedName>
    </component>
    <component>
        <recommendedName>
            <fullName evidence="5">Allatostatin-A-3</fullName>
            <shortName evidence="5">AST-A-3</shortName>
        </recommendedName>
    </component>
    <component>
        <recommendedName>
            <fullName evidence="5">Allatostatin-A-4</fullName>
            <shortName evidence="5">AST-A-4</shortName>
        </recommendedName>
    </component>
    <component>
        <recommendedName>
            <fullName evidence="5">Allatostatin-A-5</fullName>
            <shortName evidence="5">AST-A-5</shortName>
        </recommendedName>
    </component>
    <component>
        <recommendedName>
            <fullName evidence="5">Allatostatin-A-6</fullName>
            <shortName evidence="5">AST-A-6</shortName>
        </recommendedName>
    </component>
    <component>
        <recommendedName>
            <fullName evidence="5">Allatostatin-A-7</fullName>
            <shortName evidence="5">AST-A-7</shortName>
        </recommendedName>
    </component>
    <component>
        <recommendedName>
            <fullName evidence="5">Allatostatin-A-8</fullName>
            <shortName evidence="5">AST-A-8</shortName>
        </recommendedName>
    </component>
    <component>
        <recommendedName>
            <fullName evidence="5">Allatostatin-A-9</fullName>
            <shortName evidence="5">AST-A-9</shortName>
        </recommendedName>
    </component>
</protein>
<comment type="function">
    <text evidence="1">Neuropeptide inhibitors of juvenile hormone synthesis and gut muscle contraction.</text>
</comment>
<comment type="subcellular location">
    <subcellularLocation>
        <location evidence="6">Secreted</location>
    </subcellularLocation>
</comment>
<comment type="tissue specificity">
    <text>Allatostatin-A-1: Expressed in antennal lobe (AL), corpora cardiaca (CC), corpora allata (CA) and gnathal ganglion (GNG) (at protein level). Expression in AL and GNG detected in most animals, in CC and CA in some animals (at protein level). Allatostatin-A-3: Expressed in antennal lobe (AL), corpora cardiaca (CC), corpora allata (CA) and gnathal ganglion (GNG) (at protein level). Expression in AL detected in all animals, in GNG, CC and CA in most animals (at protein level). Allatostatin-A-4: Expressed in antennal lobe (AL), corpora cardiaca (CC), corpora allata (CA) and gnathal ganglion (GNG) in all animals (at protein level). Allatostatin-A-5: Expressed in antennal lobe (AL), corpora cardiaca (CC), corpora allata (CA) and gnathal ganglion (GNG) in all animals (at protein level). Allatostatin-A-6: Expressed in antennal lobe (AL) and gnathal ganglion (GNG) (at protein level). Expression in AL detected in some animals, in GNG in few animals (at protein level). Not expressed in corpora cardiaca (CC) and corpora allata (CA) (at protein level). Allatostatin-A-7: Expressed in antennal lobe (AL), corpora cardiaca (CC), corpora allata (CA) and gnathal ganglion (GNG) (at protein level). Expression in AL detected in all animals, in GNG, CC and CA in most animals (at protein level). Allatostatin-A-8: Expressed in antennal lobe (AL), corpora cardiaca (CC), corpora allata (CA) and gnathal ganglion (GNG) (at protein level). Expression in AL detected in all animals, in GNG, CC and CA in most animals (at protein level). Allatostatin-A-9: Expressed in antennal lobe (AL), corpora cardiaca (CC), corpora allata (CA) and gnathal ganglion (GNG) (at protein level). Expression in AL detected in all animals, in GNG in most animals and in CC and CA in some animals (at protein level).</text>
</comment>
<comment type="mass spectrometry">
    <molecule>Allatostatin-A-1</molecule>
</comment>
<comment type="mass spectrometry">
    <molecule>Allatostatin-A-3</molecule>
</comment>
<comment type="mass spectrometry">
    <molecule>Allatostatin-A-4</molecule>
</comment>
<comment type="mass spectrometry">
    <molecule>Allatostatin-A-5</molecule>
</comment>
<comment type="mass spectrometry">
    <molecule>Allatostatin-A-6</molecule>
</comment>
<comment type="mass spectrometry">
    <molecule>Allatostatin-A-7</molecule>
</comment>
<comment type="mass spectrometry">
    <molecule>Allatostatin-A-8</molecule>
</comment>
<comment type="mass spectrometry">
    <molecule>Allatostatin-A-9</molecule>
</comment>
<comment type="similarity">
    <text evidence="6">Belongs to the allatostatin family.</text>
</comment>
<comment type="caution">
    <text evidence="6">Further mature peptides might exist.</text>
</comment>
<proteinExistence type="evidence at protein level"/>
<name>ALLA_AGRIP</name>
<organism>
    <name type="scientific">Agrotis ipsilon</name>
    <name type="common">Black cutworm moth</name>
    <dbReference type="NCBI Taxonomy" id="56364"/>
    <lineage>
        <taxon>Eukaryota</taxon>
        <taxon>Metazoa</taxon>
        <taxon>Ecdysozoa</taxon>
        <taxon>Arthropoda</taxon>
        <taxon>Hexapoda</taxon>
        <taxon>Insecta</taxon>
        <taxon>Pterygota</taxon>
        <taxon>Neoptera</taxon>
        <taxon>Endopterygota</taxon>
        <taxon>Lepidoptera</taxon>
        <taxon>Glossata</taxon>
        <taxon>Ditrysia</taxon>
        <taxon>Noctuoidea</taxon>
        <taxon>Noctuidae</taxon>
        <taxon>Noctuinae</taxon>
        <taxon>Noctuini</taxon>
        <taxon>Agrotis</taxon>
    </lineage>
</organism>
<dbReference type="GO" id="GO:0005576">
    <property type="term" value="C:extracellular region"/>
    <property type="evidence" value="ECO:0007669"/>
    <property type="project" value="UniProtKB-SubCell"/>
</dbReference>
<dbReference type="GO" id="GO:0005184">
    <property type="term" value="F:neuropeptide hormone activity"/>
    <property type="evidence" value="ECO:0007669"/>
    <property type="project" value="InterPro"/>
</dbReference>
<dbReference type="GO" id="GO:0007218">
    <property type="term" value="P:neuropeptide signaling pathway"/>
    <property type="evidence" value="ECO:0007669"/>
    <property type="project" value="UniProtKB-KW"/>
</dbReference>
<dbReference type="InterPro" id="IPR010276">
    <property type="entry name" value="Allatostatin"/>
</dbReference>
<dbReference type="Pfam" id="PF05953">
    <property type="entry name" value="Allatostatin"/>
    <property type="match status" value="8"/>
</dbReference>
<feature type="signal peptide" evidence="2">
    <location>
        <begin position="1"/>
        <end position="18"/>
    </location>
</feature>
<feature type="propeptide" id="PRO_0000444176" evidence="6">
    <location>
        <begin position="19"/>
        <end position="48"/>
    </location>
</feature>
<feature type="peptide" id="PRO_0000444177" description="Allatostatin-A-1" evidence="4">
    <location>
        <begin position="51"/>
        <end position="58"/>
    </location>
</feature>
<feature type="propeptide" id="PRO_0000444178" evidence="6">
    <location>
        <begin position="62"/>
        <end position="80"/>
    </location>
</feature>
<feature type="peptide" id="PRO_0000444179" description="Allatostatin-A-3" evidence="4">
    <location>
        <begin position="83"/>
        <end position="90"/>
    </location>
</feature>
<feature type="propeptide" id="PRO_0000444180" evidence="6">
    <location>
        <begin position="94"/>
        <end position="130"/>
    </location>
</feature>
<feature type="peptide" id="PRO_0000444181" description="Allatostatin-A-4" evidence="4">
    <location>
        <begin position="133"/>
        <end position="140"/>
    </location>
</feature>
<feature type="propeptide" id="PRO_0000444182" evidence="6">
    <location>
        <begin position="144"/>
        <end position="152"/>
    </location>
</feature>
<feature type="peptide" id="PRO_0000444183" description="Allatostatin-A-5" evidence="4">
    <location>
        <begin position="155"/>
        <end position="162"/>
    </location>
</feature>
<feature type="peptide" id="PRO_0000444184" description="Allatostatin-A-6" evidence="4">
    <location>
        <begin position="166"/>
        <end position="173"/>
    </location>
</feature>
<feature type="peptide" id="PRO_0000444185" description="Allatostatin-A-7" evidence="4">
    <location>
        <begin position="177"/>
        <end position="184"/>
    </location>
</feature>
<feature type="peptide" id="PRO_0000444186" description="Allatostatin-A-8" evidence="4">
    <location>
        <begin position="188"/>
        <end position="196"/>
    </location>
</feature>
<feature type="peptide" id="PRO_0000444187" description="Allatostatin-A-9" evidence="4">
    <location>
        <begin position="200"/>
        <end position="210"/>
    </location>
</feature>
<feature type="propeptide" id="PRO_0000444188" evidence="6">
    <location>
        <begin position="214"/>
        <end position="229"/>
    </location>
</feature>
<feature type="region of interest" description="Disordered" evidence="3">
    <location>
        <begin position="23"/>
        <end position="46"/>
    </location>
</feature>
<feature type="modified residue" description="Leucine amide" evidence="4">
    <location>
        <position position="58"/>
    </location>
</feature>
<feature type="modified residue" description="Leucine amide" evidence="4">
    <location>
        <position position="90"/>
    </location>
</feature>
<feature type="modified residue" description="Leucine amide" evidence="4">
    <location>
        <position position="140"/>
    </location>
</feature>
<feature type="modified residue" description="Leucine amide" evidence="4">
    <location>
        <position position="162"/>
    </location>
</feature>
<feature type="modified residue" description="Leucine amide" evidence="4">
    <location>
        <position position="173"/>
    </location>
</feature>
<feature type="modified residue" description="Leucine amide" evidence="4">
    <location>
        <position position="184"/>
    </location>
</feature>
<feature type="modified residue" description="Leucine amide" evidence="4">
    <location>
        <position position="196"/>
    </location>
</feature>
<feature type="modified residue" description="Leucine amide" evidence="4">
    <location>
        <position position="210"/>
    </location>
</feature>
<sequence>MLSTSLPVCFLVIGAALCAPERMQNDPDPHDSTAQGSDNHSDHIAPLAKRSPHYDFGLGKRAYSYVSEYKRLPVYNFGLGKRSRPYSFGLGKRSVDEDQTNDDQQQIMNNDLDQAALAEFFDQYDDAGYEKRARPYSFGLGKRFADDDTSEEKRARAYDFGLGKRLPLYNFGLGKRARSYNFGLGKRLASKFNFGLGKRERDMHRFSFGLGKRSADDASTEDSDNYFDV</sequence>
<evidence type="ECO:0000250" key="1">
    <source>
        <dbReference type="UniProtKB" id="P12764"/>
    </source>
</evidence>
<evidence type="ECO:0000255" key="2"/>
<evidence type="ECO:0000256" key="3">
    <source>
        <dbReference type="SAM" id="MobiDB-lite"/>
    </source>
</evidence>
<evidence type="ECO:0000269" key="4">
    <source>
    </source>
</evidence>
<evidence type="ECO:0000303" key="5">
    <source>
    </source>
</evidence>
<evidence type="ECO:0000305" key="6"/>
<reference evidence="6" key="1">
    <citation type="journal article" date="2018" name="J. Proteome Res.">
        <title>Mating-induced differential peptidomics of neuropeptides and protein hormones in Agrotis ipsilon moths.</title>
        <authorList>
            <person name="Diesner M."/>
            <person name="Gallot A."/>
            <person name="Binz H."/>
            <person name="Gaertner C."/>
            <person name="Vitecek S."/>
            <person name="Kahnt J."/>
            <person name="Schachtner J."/>
            <person name="Jacquin-Joly E."/>
            <person name="Gadenne C."/>
        </authorList>
    </citation>
    <scope>NUCLEOTIDE SEQUENCE [MRNA]</scope>
    <scope>PROTEIN SEQUENCE OF 51-58; 83-90; 133-140; 155-162; 166-173; 177-184; 188-196 AND 200-210</scope>
    <scope>TISSUE SPECIFICITY</scope>
    <scope>MASS SPECTROMETRY</scope>
    <scope>IDENTIFICATION BY MASS SPECTROMETRY</scope>
    <scope>AMIDATION AT LEU-58; LEU-90; LEU-140; LEU-162; LEU-173; LEU-184; LEU-196 AND LEU-210</scope>
</reference>